<organism>
    <name type="scientific">Paralichthys olivaceus</name>
    <name type="common">Bastard halibut</name>
    <name type="synonym">Hippoglossus olivaceus</name>
    <dbReference type="NCBI Taxonomy" id="8255"/>
    <lineage>
        <taxon>Eukaryota</taxon>
        <taxon>Metazoa</taxon>
        <taxon>Chordata</taxon>
        <taxon>Craniata</taxon>
        <taxon>Vertebrata</taxon>
        <taxon>Euteleostomi</taxon>
        <taxon>Actinopterygii</taxon>
        <taxon>Neopterygii</taxon>
        <taxon>Teleostei</taxon>
        <taxon>Neoteleostei</taxon>
        <taxon>Acanthomorphata</taxon>
        <taxon>Carangaria</taxon>
        <taxon>Pleuronectiformes</taxon>
        <taxon>Pleuronectoidei</taxon>
        <taxon>Paralichthyidae</taxon>
        <taxon>Paralichthys</taxon>
    </lineage>
</organism>
<evidence type="ECO:0000250" key="1"/>
<evidence type="ECO:0000255" key="2"/>
<evidence type="ECO:0000305" key="3"/>
<protein>
    <recommendedName>
        <fullName>Type-4 ice-structuring protein</fullName>
    </recommendedName>
    <alternativeName>
        <fullName>Antifreeze protein type IV</fullName>
    </alternativeName>
</protein>
<dbReference type="EMBL" id="AF384676">
    <property type="protein sequence ID" value="AAM46175.1"/>
    <property type="molecule type" value="Genomic_DNA"/>
</dbReference>
<dbReference type="RefSeq" id="XP_019957605.1">
    <property type="nucleotide sequence ID" value="XM_020102046.2"/>
</dbReference>
<dbReference type="SMR" id="Q8JI37"/>
<dbReference type="GeneID" id="109638865"/>
<dbReference type="KEGG" id="pov:109638865"/>
<dbReference type="OrthoDB" id="63354at7898"/>
<dbReference type="GO" id="GO:0005576">
    <property type="term" value="C:extracellular region"/>
    <property type="evidence" value="ECO:0007669"/>
    <property type="project" value="UniProtKB-SubCell"/>
</dbReference>
<dbReference type="Gene3D" id="6.10.250.100">
    <property type="match status" value="1"/>
</dbReference>
<dbReference type="SUPFAM" id="SSF58113">
    <property type="entry name" value="Apolipoprotein A-I"/>
    <property type="match status" value="1"/>
</dbReference>
<feature type="signal peptide" evidence="2">
    <location>
        <begin position="1"/>
        <end position="20"/>
    </location>
</feature>
<feature type="chain" id="PRO_0000042949" description="Type-4 ice-structuring protein">
    <location>
        <begin position="21"/>
        <end position="124"/>
    </location>
</feature>
<feature type="modified residue" description="Pyrrolidone carboxylic acid" evidence="1">
    <location>
        <position position="21"/>
    </location>
</feature>
<comment type="function">
    <text evidence="1">Antifreeze proteins lower the blood freezing point.</text>
</comment>
<comment type="subcellular location">
    <subcellularLocation>
        <location evidence="1">Secreted</location>
    </subcellularLocation>
</comment>
<comment type="similarity">
    <text evidence="3">Belongs to the apolipoprotein A1/A4/E family.</text>
</comment>
<name>AFP4_PAROL</name>
<reference key="1">
    <citation type="submission" date="2001-05" db="EMBL/GenBank/DDBJ databases">
        <title>Antifreeze protein gene of Japanese flounder similar to antifreeze protein type IV of Longhorn sculpin.</title>
        <authorList>
            <person name="Lee J."/>
            <person name="Song Y."/>
        </authorList>
    </citation>
    <scope>NUCLEOTIDE SEQUENCE [GENOMIC DNA]</scope>
</reference>
<keyword id="KW-0047">Antifreeze protein</keyword>
<keyword id="KW-0873">Pyrrolidone carboxylic acid</keyword>
<keyword id="KW-0964">Secreted</keyword>
<keyword id="KW-0732">Signal</keyword>
<proteinExistence type="inferred from homology"/>
<sequence>MKFSLIAAVALLALAQGSFAQDAADLEKITQYFENLKNKMTEDVTAFLTNQDVANQAQTFMQERKTQLEPLATQIQEQLRAAATKFEEHITPLAANVQPVVENFQQQMEALVQKLMEKTRSISN</sequence>
<accession>Q8JI37</accession>